<protein>
    <recommendedName>
        <fullName>Phosphoribosyl pyrophosphate synthase-associated protein 1</fullName>
        <shortName>PRPP synthase-associated protein 1</shortName>
    </recommendedName>
    <alternativeName>
        <fullName>39 kDa phosphoribosypyrophosphate synthase-associated protein</fullName>
        <shortName>PAP39</shortName>
    </alternativeName>
</protein>
<sequence length="356" mass="39394">MNAARTGYRVFSANSTAACTELAKRITERLGAELGKSVVYQETNGETRVEIKESVRGQDIFIIQTIPRDVNTAVMELLIMAYALKTACARNIIGVIPYFPYSKQSKMRKRGSIVCKLLASMLAKAGLTHIITMDLHQKEIQGFFSFPVDNLRASPFLLQYIQEEIPNYRNAVIVAKSPDAAKRAQSYAERLRLGLAVIHGEAQCTELDMDDGRHSPPMVKNATVHPGLELPLMMAKEKPPITVVGDVGGRIAIIVDDIIDDVESFVAAAEILKERGAYKIYVMATHGILSAEAPRLIEESSVDEVVVTNTVPHEVQKLQCPKIKTVDISLILSEAIRRIHNGESMAYLFRNITVDD</sequence>
<dbReference type="EMBL" id="D61391">
    <property type="protein sequence ID" value="BAA09612.1"/>
    <property type="molecule type" value="mRNA"/>
</dbReference>
<dbReference type="EMBL" id="AK312637">
    <property type="protein sequence ID" value="BAG35521.1"/>
    <property type="status" value="ALT_INIT"/>
    <property type="molecule type" value="mRNA"/>
</dbReference>
<dbReference type="EMBL" id="AC090699">
    <property type="status" value="NOT_ANNOTATED_CDS"/>
    <property type="molecule type" value="Genomic_DNA"/>
</dbReference>
<dbReference type="EMBL" id="CH471099">
    <property type="protein sequence ID" value="EAW89386.1"/>
    <property type="molecule type" value="Genomic_DNA"/>
</dbReference>
<dbReference type="EMBL" id="BC009012">
    <property type="protein sequence ID" value="AAH09012.1"/>
    <property type="molecule type" value="mRNA"/>
</dbReference>
<dbReference type="CCDS" id="CCDS11743.2">
    <molecule id="Q14558-2"/>
</dbReference>
<dbReference type="PIR" id="S71460">
    <property type="entry name" value="S71460"/>
</dbReference>
<dbReference type="RefSeq" id="NP_002757.2">
    <molecule id="Q14558-2"/>
    <property type="nucleotide sequence ID" value="NM_002766.3"/>
</dbReference>
<dbReference type="PDB" id="2C4K">
    <property type="method" value="X-ray"/>
    <property type="resolution" value="2.65 A"/>
    <property type="chains" value="A/B/C/D/E/F=5-351"/>
</dbReference>
<dbReference type="PDBsum" id="2C4K"/>
<dbReference type="SMR" id="Q14558"/>
<dbReference type="BioGRID" id="111618">
    <property type="interactions" value="130"/>
</dbReference>
<dbReference type="FunCoup" id="Q14558">
    <property type="interactions" value="694"/>
</dbReference>
<dbReference type="IntAct" id="Q14558">
    <property type="interactions" value="60"/>
</dbReference>
<dbReference type="MINT" id="Q14558"/>
<dbReference type="STRING" id="9606.ENSP00000414624"/>
<dbReference type="GlyGen" id="Q14558">
    <property type="glycosylation" value="3 sites, 2 N-linked glycans (2 sites), 1 O-linked glycan (1 site)"/>
</dbReference>
<dbReference type="iPTMnet" id="Q14558"/>
<dbReference type="PhosphoSitePlus" id="Q14558"/>
<dbReference type="BioMuta" id="PRPSAP1"/>
<dbReference type="DMDM" id="24418495"/>
<dbReference type="jPOST" id="Q14558"/>
<dbReference type="MassIVE" id="Q14558"/>
<dbReference type="PaxDb" id="9606-ENSP00000414624"/>
<dbReference type="PeptideAtlas" id="Q14558"/>
<dbReference type="ProteomicsDB" id="60042">
    <molecule id="Q14558-1"/>
</dbReference>
<dbReference type="ProteomicsDB" id="60043">
    <molecule id="Q14558-2"/>
</dbReference>
<dbReference type="Pumba" id="Q14558"/>
<dbReference type="Antibodypedia" id="32394">
    <property type="antibodies" value="174 antibodies from 27 providers"/>
</dbReference>
<dbReference type="DNASU" id="5635"/>
<dbReference type="Ensembl" id="ENST00000446526.8">
    <molecule id="Q14558-2"/>
    <property type="protein sequence ID" value="ENSP00000414624.2"/>
    <property type="gene ID" value="ENSG00000161542.17"/>
</dbReference>
<dbReference type="GeneID" id="5635"/>
<dbReference type="KEGG" id="hsa:5635"/>
<dbReference type="MANE-Select" id="ENST00000446526.8">
    <molecule id="Q14558-2"/>
    <property type="protein sequence ID" value="ENSP00000414624.2"/>
    <property type="RefSeq nucleotide sequence ID" value="NM_002766.3"/>
    <property type="RefSeq protein sequence ID" value="NP_002757.2"/>
</dbReference>
<dbReference type="UCSC" id="uc010wta.2">
    <molecule id="Q14558-1"/>
    <property type="organism name" value="human"/>
</dbReference>
<dbReference type="AGR" id="HGNC:9466"/>
<dbReference type="CTD" id="5635"/>
<dbReference type="DisGeNET" id="5635"/>
<dbReference type="GeneCards" id="PRPSAP1"/>
<dbReference type="HGNC" id="HGNC:9466">
    <property type="gene designation" value="PRPSAP1"/>
</dbReference>
<dbReference type="HPA" id="ENSG00000161542">
    <property type="expression patterns" value="Low tissue specificity"/>
</dbReference>
<dbReference type="MIM" id="601249">
    <property type="type" value="gene"/>
</dbReference>
<dbReference type="neXtProt" id="NX_Q14558"/>
<dbReference type="OpenTargets" id="ENSG00000161542"/>
<dbReference type="PharmGKB" id="PA33821"/>
<dbReference type="VEuPathDB" id="HostDB:ENSG00000161542"/>
<dbReference type="eggNOG" id="KOG1503">
    <property type="taxonomic scope" value="Eukaryota"/>
</dbReference>
<dbReference type="GeneTree" id="ENSGT00950000182803"/>
<dbReference type="InParanoid" id="Q14558"/>
<dbReference type="OMA" id="GIIACPG"/>
<dbReference type="OrthoDB" id="413572at2759"/>
<dbReference type="PAN-GO" id="Q14558">
    <property type="GO annotations" value="5 GO annotations based on evolutionary models"/>
</dbReference>
<dbReference type="PhylomeDB" id="Q14558"/>
<dbReference type="TreeFam" id="TF106367"/>
<dbReference type="PathwayCommons" id="Q14558"/>
<dbReference type="SignaLink" id="Q14558"/>
<dbReference type="BioGRID-ORCS" id="5635">
    <property type="hits" value="9 hits in 1152 CRISPR screens"/>
</dbReference>
<dbReference type="ChiTaRS" id="PRPSAP1">
    <property type="organism name" value="human"/>
</dbReference>
<dbReference type="EvolutionaryTrace" id="Q14558"/>
<dbReference type="GeneWiki" id="PRPSAP1"/>
<dbReference type="GenomeRNAi" id="5635"/>
<dbReference type="Pharos" id="Q14558">
    <property type="development level" value="Tbio"/>
</dbReference>
<dbReference type="PRO" id="PR:Q14558"/>
<dbReference type="Proteomes" id="UP000005640">
    <property type="component" value="Chromosome 17"/>
</dbReference>
<dbReference type="RNAct" id="Q14558">
    <property type="molecule type" value="protein"/>
</dbReference>
<dbReference type="Bgee" id="ENSG00000161542">
    <property type="expression patterns" value="Expressed in parotid gland and 205 other cell types or tissues"/>
</dbReference>
<dbReference type="ExpressionAtlas" id="Q14558">
    <property type="expression patterns" value="baseline and differential"/>
</dbReference>
<dbReference type="GO" id="GO:0005737">
    <property type="term" value="C:cytoplasm"/>
    <property type="evidence" value="ECO:0000318"/>
    <property type="project" value="GO_Central"/>
</dbReference>
<dbReference type="GO" id="GO:0004857">
    <property type="term" value="F:enzyme inhibitor activity"/>
    <property type="evidence" value="ECO:0000304"/>
    <property type="project" value="ProtInc"/>
</dbReference>
<dbReference type="GO" id="GO:0030234">
    <property type="term" value="F:enzyme regulator activity"/>
    <property type="evidence" value="ECO:0000318"/>
    <property type="project" value="GO_Central"/>
</dbReference>
<dbReference type="GO" id="GO:0042802">
    <property type="term" value="F:identical protein binding"/>
    <property type="evidence" value="ECO:0000353"/>
    <property type="project" value="IntAct"/>
</dbReference>
<dbReference type="GO" id="GO:0000287">
    <property type="term" value="F:magnesium ion binding"/>
    <property type="evidence" value="ECO:0007669"/>
    <property type="project" value="InterPro"/>
</dbReference>
<dbReference type="GO" id="GO:0006015">
    <property type="term" value="P:5-phosphoribose 1-diphosphate biosynthetic process"/>
    <property type="evidence" value="ECO:0000318"/>
    <property type="project" value="GO_Central"/>
</dbReference>
<dbReference type="GO" id="GO:0006139">
    <property type="term" value="P:nucleobase-containing compound metabolic process"/>
    <property type="evidence" value="ECO:0000304"/>
    <property type="project" value="ProtInc"/>
</dbReference>
<dbReference type="GO" id="GO:0006164">
    <property type="term" value="P:purine nucleotide biosynthetic process"/>
    <property type="evidence" value="ECO:0000318"/>
    <property type="project" value="GO_Central"/>
</dbReference>
<dbReference type="FunFam" id="3.40.50.2020:FF:000012">
    <property type="entry name" value="Phosphoribosyl pyrophosphate synthase-associated protein 2 isoform 1"/>
    <property type="match status" value="1"/>
</dbReference>
<dbReference type="FunFam" id="3.40.50.2020:FF:000014">
    <property type="entry name" value="Ribose-phosphate pyrophosphokinase 1"/>
    <property type="match status" value="1"/>
</dbReference>
<dbReference type="Gene3D" id="3.40.50.2020">
    <property type="match status" value="2"/>
</dbReference>
<dbReference type="InterPro" id="IPR029099">
    <property type="entry name" value="Pribosyltran_N"/>
</dbReference>
<dbReference type="InterPro" id="IPR029057">
    <property type="entry name" value="PRTase-like"/>
</dbReference>
<dbReference type="InterPro" id="IPR005946">
    <property type="entry name" value="Rib-P_diPkinase"/>
</dbReference>
<dbReference type="NCBIfam" id="TIGR01251">
    <property type="entry name" value="ribP_PPkin"/>
    <property type="match status" value="1"/>
</dbReference>
<dbReference type="PANTHER" id="PTHR10210:SF28">
    <property type="entry name" value="PHOSPHORIBOSYL PYROPHOSPHATE SYNTHASE-ASSOCIATED PROTEIN 1"/>
    <property type="match status" value="1"/>
</dbReference>
<dbReference type="PANTHER" id="PTHR10210">
    <property type="entry name" value="RIBOSE-PHOSPHATE DIPHOSPHOKINASE FAMILY MEMBER"/>
    <property type="match status" value="1"/>
</dbReference>
<dbReference type="Pfam" id="PF14572">
    <property type="entry name" value="Pribosyl_synth"/>
    <property type="match status" value="1"/>
</dbReference>
<dbReference type="Pfam" id="PF13793">
    <property type="entry name" value="Pribosyltran_N"/>
    <property type="match status" value="1"/>
</dbReference>
<dbReference type="SMART" id="SM01400">
    <property type="entry name" value="Pribosyltran_N"/>
    <property type="match status" value="1"/>
</dbReference>
<dbReference type="SUPFAM" id="SSF53271">
    <property type="entry name" value="PRTase-like"/>
    <property type="match status" value="2"/>
</dbReference>
<reference key="1">
    <citation type="journal article" date="1996" name="Biochim. Biophys. Acta">
        <title>Cloning and sequencing of human complementary DNA for the phosphoribosylpyrophosphate synthetase-associated protein 39.</title>
        <authorList>
            <person name="Ishizuka T."/>
            <person name="Kita K."/>
            <person name="Sonoda T."/>
            <person name="Ishijima S."/>
            <person name="Sawa K."/>
            <person name="Suzuki N."/>
            <person name="Tatibana M."/>
        </authorList>
    </citation>
    <scope>NUCLEOTIDE SEQUENCE [MRNA] (ISOFORM 1)</scope>
    <source>
        <tissue>Hepatoma</tissue>
    </source>
</reference>
<reference key="2">
    <citation type="journal article" date="2004" name="Nat. Genet.">
        <title>Complete sequencing and characterization of 21,243 full-length human cDNAs.</title>
        <authorList>
            <person name="Ota T."/>
            <person name="Suzuki Y."/>
            <person name="Nishikawa T."/>
            <person name="Otsuki T."/>
            <person name="Sugiyama T."/>
            <person name="Irie R."/>
            <person name="Wakamatsu A."/>
            <person name="Hayashi K."/>
            <person name="Sato H."/>
            <person name="Nagai K."/>
            <person name="Kimura K."/>
            <person name="Makita H."/>
            <person name="Sekine M."/>
            <person name="Obayashi M."/>
            <person name="Nishi T."/>
            <person name="Shibahara T."/>
            <person name="Tanaka T."/>
            <person name="Ishii S."/>
            <person name="Yamamoto J."/>
            <person name="Saito K."/>
            <person name="Kawai Y."/>
            <person name="Isono Y."/>
            <person name="Nakamura Y."/>
            <person name="Nagahari K."/>
            <person name="Murakami K."/>
            <person name="Yasuda T."/>
            <person name="Iwayanagi T."/>
            <person name="Wagatsuma M."/>
            <person name="Shiratori A."/>
            <person name="Sudo H."/>
            <person name="Hosoiri T."/>
            <person name="Kaku Y."/>
            <person name="Kodaira H."/>
            <person name="Kondo H."/>
            <person name="Sugawara M."/>
            <person name="Takahashi M."/>
            <person name="Kanda K."/>
            <person name="Yokoi T."/>
            <person name="Furuya T."/>
            <person name="Kikkawa E."/>
            <person name="Omura Y."/>
            <person name="Abe K."/>
            <person name="Kamihara K."/>
            <person name="Katsuta N."/>
            <person name="Sato K."/>
            <person name="Tanikawa M."/>
            <person name="Yamazaki M."/>
            <person name="Ninomiya K."/>
            <person name="Ishibashi T."/>
            <person name="Yamashita H."/>
            <person name="Murakawa K."/>
            <person name="Fujimori K."/>
            <person name="Tanai H."/>
            <person name="Kimata M."/>
            <person name="Watanabe M."/>
            <person name="Hiraoka S."/>
            <person name="Chiba Y."/>
            <person name="Ishida S."/>
            <person name="Ono Y."/>
            <person name="Takiguchi S."/>
            <person name="Watanabe S."/>
            <person name="Yosida M."/>
            <person name="Hotuta T."/>
            <person name="Kusano J."/>
            <person name="Kanehori K."/>
            <person name="Takahashi-Fujii A."/>
            <person name="Hara H."/>
            <person name="Tanase T.-O."/>
            <person name="Nomura Y."/>
            <person name="Togiya S."/>
            <person name="Komai F."/>
            <person name="Hara R."/>
            <person name="Takeuchi K."/>
            <person name="Arita M."/>
            <person name="Imose N."/>
            <person name="Musashino K."/>
            <person name="Yuuki H."/>
            <person name="Oshima A."/>
            <person name="Sasaki N."/>
            <person name="Aotsuka S."/>
            <person name="Yoshikawa Y."/>
            <person name="Matsunawa H."/>
            <person name="Ichihara T."/>
            <person name="Shiohata N."/>
            <person name="Sano S."/>
            <person name="Moriya S."/>
            <person name="Momiyama H."/>
            <person name="Satoh N."/>
            <person name="Takami S."/>
            <person name="Terashima Y."/>
            <person name="Suzuki O."/>
            <person name="Nakagawa S."/>
            <person name="Senoh A."/>
            <person name="Mizoguchi H."/>
            <person name="Goto Y."/>
            <person name="Shimizu F."/>
            <person name="Wakebe H."/>
            <person name="Hishigaki H."/>
            <person name="Watanabe T."/>
            <person name="Sugiyama A."/>
            <person name="Takemoto M."/>
            <person name="Kawakami B."/>
            <person name="Yamazaki M."/>
            <person name="Watanabe K."/>
            <person name="Kumagai A."/>
            <person name="Itakura S."/>
            <person name="Fukuzumi Y."/>
            <person name="Fujimori Y."/>
            <person name="Komiyama M."/>
            <person name="Tashiro H."/>
            <person name="Tanigami A."/>
            <person name="Fujiwara T."/>
            <person name="Ono T."/>
            <person name="Yamada K."/>
            <person name="Fujii Y."/>
            <person name="Ozaki K."/>
            <person name="Hirao M."/>
            <person name="Ohmori Y."/>
            <person name="Kawabata A."/>
            <person name="Hikiji T."/>
            <person name="Kobatake N."/>
            <person name="Inagaki H."/>
            <person name="Ikema Y."/>
            <person name="Okamoto S."/>
            <person name="Okitani R."/>
            <person name="Kawakami T."/>
            <person name="Noguchi S."/>
            <person name="Itoh T."/>
            <person name="Shigeta K."/>
            <person name="Senba T."/>
            <person name="Matsumura K."/>
            <person name="Nakajima Y."/>
            <person name="Mizuno T."/>
            <person name="Morinaga M."/>
            <person name="Sasaki M."/>
            <person name="Togashi T."/>
            <person name="Oyama M."/>
            <person name="Hata H."/>
            <person name="Watanabe M."/>
            <person name="Komatsu T."/>
            <person name="Mizushima-Sugano J."/>
            <person name="Satoh T."/>
            <person name="Shirai Y."/>
            <person name="Takahashi Y."/>
            <person name="Nakagawa K."/>
            <person name="Okumura K."/>
            <person name="Nagase T."/>
            <person name="Nomura N."/>
            <person name="Kikuchi H."/>
            <person name="Masuho Y."/>
            <person name="Yamashita R."/>
            <person name="Nakai K."/>
            <person name="Yada T."/>
            <person name="Nakamura Y."/>
            <person name="Ohara O."/>
            <person name="Isogai T."/>
            <person name="Sugano S."/>
        </authorList>
    </citation>
    <scope>NUCLEOTIDE SEQUENCE [LARGE SCALE MRNA] (ISOFORM 2)</scope>
    <source>
        <tissue>Lung</tissue>
    </source>
</reference>
<reference key="3">
    <citation type="journal article" date="2006" name="Nature">
        <title>DNA sequence of human chromosome 17 and analysis of rearrangement in the human lineage.</title>
        <authorList>
            <person name="Zody M.C."/>
            <person name="Garber M."/>
            <person name="Adams D.J."/>
            <person name="Sharpe T."/>
            <person name="Harrow J."/>
            <person name="Lupski J.R."/>
            <person name="Nicholson C."/>
            <person name="Searle S.M."/>
            <person name="Wilming L."/>
            <person name="Young S.K."/>
            <person name="Abouelleil A."/>
            <person name="Allen N.R."/>
            <person name="Bi W."/>
            <person name="Bloom T."/>
            <person name="Borowsky M.L."/>
            <person name="Bugalter B.E."/>
            <person name="Butler J."/>
            <person name="Chang J.L."/>
            <person name="Chen C.-K."/>
            <person name="Cook A."/>
            <person name="Corum B."/>
            <person name="Cuomo C.A."/>
            <person name="de Jong P.J."/>
            <person name="DeCaprio D."/>
            <person name="Dewar K."/>
            <person name="FitzGerald M."/>
            <person name="Gilbert J."/>
            <person name="Gibson R."/>
            <person name="Gnerre S."/>
            <person name="Goldstein S."/>
            <person name="Grafham D.V."/>
            <person name="Grocock R."/>
            <person name="Hafez N."/>
            <person name="Hagopian D.S."/>
            <person name="Hart E."/>
            <person name="Norman C.H."/>
            <person name="Humphray S."/>
            <person name="Jaffe D.B."/>
            <person name="Jones M."/>
            <person name="Kamal M."/>
            <person name="Khodiyar V.K."/>
            <person name="LaButti K."/>
            <person name="Laird G."/>
            <person name="Lehoczky J."/>
            <person name="Liu X."/>
            <person name="Lokyitsang T."/>
            <person name="Loveland J."/>
            <person name="Lui A."/>
            <person name="Macdonald P."/>
            <person name="Major J.E."/>
            <person name="Matthews L."/>
            <person name="Mauceli E."/>
            <person name="McCarroll S.A."/>
            <person name="Mihalev A.H."/>
            <person name="Mudge J."/>
            <person name="Nguyen C."/>
            <person name="Nicol R."/>
            <person name="O'Leary S.B."/>
            <person name="Osoegawa K."/>
            <person name="Schwartz D.C."/>
            <person name="Shaw-Smith C."/>
            <person name="Stankiewicz P."/>
            <person name="Steward C."/>
            <person name="Swarbreck D."/>
            <person name="Venkataraman V."/>
            <person name="Whittaker C.A."/>
            <person name="Yang X."/>
            <person name="Zimmer A.R."/>
            <person name="Bradley A."/>
            <person name="Hubbard T."/>
            <person name="Birren B.W."/>
            <person name="Rogers J."/>
            <person name="Lander E.S."/>
            <person name="Nusbaum C."/>
        </authorList>
    </citation>
    <scope>NUCLEOTIDE SEQUENCE [LARGE SCALE GENOMIC DNA]</scope>
</reference>
<reference key="4">
    <citation type="submission" date="2005-07" db="EMBL/GenBank/DDBJ databases">
        <authorList>
            <person name="Mural R.J."/>
            <person name="Istrail S."/>
            <person name="Sutton G.G."/>
            <person name="Florea L."/>
            <person name="Halpern A.L."/>
            <person name="Mobarry C.M."/>
            <person name="Lippert R."/>
            <person name="Walenz B."/>
            <person name="Shatkay H."/>
            <person name="Dew I."/>
            <person name="Miller J.R."/>
            <person name="Flanigan M.J."/>
            <person name="Edwards N.J."/>
            <person name="Bolanos R."/>
            <person name="Fasulo D."/>
            <person name="Halldorsson B.V."/>
            <person name="Hannenhalli S."/>
            <person name="Turner R."/>
            <person name="Yooseph S."/>
            <person name="Lu F."/>
            <person name="Nusskern D.R."/>
            <person name="Shue B.C."/>
            <person name="Zheng X.H."/>
            <person name="Zhong F."/>
            <person name="Delcher A.L."/>
            <person name="Huson D.H."/>
            <person name="Kravitz S.A."/>
            <person name="Mouchard L."/>
            <person name="Reinert K."/>
            <person name="Remington K.A."/>
            <person name="Clark A.G."/>
            <person name="Waterman M.S."/>
            <person name="Eichler E.E."/>
            <person name="Adams M.D."/>
            <person name="Hunkapiller M.W."/>
            <person name="Myers E.W."/>
            <person name="Venter J.C."/>
        </authorList>
    </citation>
    <scope>NUCLEOTIDE SEQUENCE [LARGE SCALE GENOMIC DNA]</scope>
</reference>
<reference key="5">
    <citation type="journal article" date="2004" name="Genome Res.">
        <title>The status, quality, and expansion of the NIH full-length cDNA project: the Mammalian Gene Collection (MGC).</title>
        <authorList>
            <consortium name="The MGC Project Team"/>
        </authorList>
    </citation>
    <scope>NUCLEOTIDE SEQUENCE [LARGE SCALE MRNA] (ISOFORMS 1/2)</scope>
    <source>
        <tissue>Brain</tissue>
    </source>
</reference>
<reference key="6">
    <citation type="journal article" date="2008" name="Proc. Natl. Acad. Sci. U.S.A.">
        <title>A quantitative atlas of mitotic phosphorylation.</title>
        <authorList>
            <person name="Dephoure N."/>
            <person name="Zhou C."/>
            <person name="Villen J."/>
            <person name="Beausoleil S.A."/>
            <person name="Bakalarski C.E."/>
            <person name="Elledge S.J."/>
            <person name="Gygi S.P."/>
        </authorList>
    </citation>
    <scope>PHOSPHORYLATION [LARGE SCALE ANALYSIS] AT SER-215</scope>
    <scope>IDENTIFICATION BY MASS SPECTROMETRY [LARGE SCALE ANALYSIS]</scope>
    <source>
        <tissue>Cervix carcinoma</tissue>
    </source>
</reference>
<reference key="7">
    <citation type="journal article" date="2009" name="Anal. Chem.">
        <title>Lys-N and trypsin cover complementary parts of the phosphoproteome in a refined SCX-based approach.</title>
        <authorList>
            <person name="Gauci S."/>
            <person name="Helbig A.O."/>
            <person name="Slijper M."/>
            <person name="Krijgsveld J."/>
            <person name="Heck A.J."/>
            <person name="Mohammed S."/>
        </authorList>
    </citation>
    <scope>ACETYLATION [LARGE SCALE ANALYSIS] AT MET-1</scope>
    <scope>IDENTIFICATION BY MASS SPECTROMETRY [LARGE SCALE ANALYSIS]</scope>
</reference>
<reference key="8">
    <citation type="journal article" date="2011" name="BMC Syst. Biol.">
        <title>Initial characterization of the human central proteome.</title>
        <authorList>
            <person name="Burkard T.R."/>
            <person name="Planyavsky M."/>
            <person name="Kaupe I."/>
            <person name="Breitwieser F.P."/>
            <person name="Buerckstuemmer T."/>
            <person name="Bennett K.L."/>
            <person name="Superti-Furga G."/>
            <person name="Colinge J."/>
        </authorList>
    </citation>
    <scope>IDENTIFICATION BY MASS SPECTROMETRY [LARGE SCALE ANALYSIS]</scope>
</reference>
<reference key="9">
    <citation type="journal article" date="2013" name="J. Proteome Res.">
        <title>Toward a comprehensive characterization of a human cancer cell phosphoproteome.</title>
        <authorList>
            <person name="Zhou H."/>
            <person name="Di Palma S."/>
            <person name="Preisinger C."/>
            <person name="Peng M."/>
            <person name="Polat A.N."/>
            <person name="Heck A.J."/>
            <person name="Mohammed S."/>
        </authorList>
    </citation>
    <scope>PHOSPHORYLATION [LARGE SCALE ANALYSIS] AT SER-177</scope>
    <scope>IDENTIFICATION BY MASS SPECTROMETRY [LARGE SCALE ANALYSIS]</scope>
    <source>
        <tissue>Erythroleukemia</tissue>
    </source>
</reference>
<reference key="10">
    <citation type="journal article" date="2014" name="J. Proteomics">
        <title>An enzyme assisted RP-RPLC approach for in-depth analysis of human liver phosphoproteome.</title>
        <authorList>
            <person name="Bian Y."/>
            <person name="Song C."/>
            <person name="Cheng K."/>
            <person name="Dong M."/>
            <person name="Wang F."/>
            <person name="Huang J."/>
            <person name="Sun D."/>
            <person name="Wang L."/>
            <person name="Ye M."/>
            <person name="Zou H."/>
        </authorList>
    </citation>
    <scope>PHOSPHORYLATION [LARGE SCALE ANALYSIS] AT SER-215</scope>
    <scope>IDENTIFICATION BY MASS SPECTROMETRY [LARGE SCALE ANALYSIS]</scope>
    <source>
        <tissue>Liver</tissue>
    </source>
</reference>
<reference key="11">
    <citation type="journal article" date="2023" name="Life. Sci Alliance">
        <title>N-terminal proteoforms may engage in different protein complexes.</title>
        <authorList>
            <person name="Bogaert A."/>
            <person name="Fijalkowska D."/>
            <person name="Staes A."/>
            <person name="Van de Steene T."/>
            <person name="Vuylsteke M."/>
            <person name="Stadler C."/>
            <person name="Eyckerman S."/>
            <person name="Spirohn K."/>
            <person name="Hao T."/>
            <person name="Calderwood M.A."/>
            <person name="Gevaert K."/>
        </authorList>
    </citation>
    <scope>ACETYLATION AT MET-1 (ISOFORM 1)</scope>
    <scope>CLEAVAGE OF INITIATOR METHIONINE (ISOFORM 2)</scope>
    <scope>ACETYLATION AT PRO-2 (ISOFORM 2)</scope>
</reference>
<reference key="12">
    <citation type="submission" date="2009-02" db="PDB data bank">
        <title>Crystal structure of human phosphoribosylpyrophosphate synthetase-associated protein 39 (Pap39).</title>
        <authorList>
            <consortium name="Structural genomics consortium (SGC)"/>
        </authorList>
    </citation>
    <scope>X-RAY CRYSTALLOGRAPHY (2.65 ANGSTROMS) OF 5-361</scope>
</reference>
<feature type="chain" id="PRO_0000141079" description="Phosphoribosyl pyrophosphate synthase-associated protein 1">
    <location>
        <begin position="1"/>
        <end position="356"/>
    </location>
</feature>
<feature type="modified residue" description="N-acetylmethionine" evidence="1 5">
    <location>
        <position position="1"/>
    </location>
</feature>
<feature type="modified residue" description="Phosphoserine" evidence="6">
    <location>
        <position position="177"/>
    </location>
</feature>
<feature type="modified residue" description="Phosphoserine" evidence="4 7">
    <location>
        <position position="215"/>
    </location>
</feature>
<feature type="splice variant" id="VSP_039062" description="In isoform 2." evidence="2">
    <original>M</original>
    <variation>MPKKLLLLPPPSASSAFRVPRARPVPPPAM</variation>
    <location>
        <position position="1"/>
    </location>
</feature>
<feature type="sequence conflict" description="In Ref. 1; BAA09612." evidence="3" ref="1">
    <original>S</original>
    <variation>L</variation>
    <location>
        <position position="12"/>
    </location>
</feature>
<feature type="sequence conflict" description="In Ref. 1; BAA09612." evidence="3" ref="1">
    <original>S</original>
    <variation>F</variation>
    <location>
        <position position="54"/>
    </location>
</feature>
<feature type="strand" evidence="8">
    <location>
        <begin position="9"/>
        <end position="12"/>
    </location>
</feature>
<feature type="turn" evidence="8">
    <location>
        <begin position="17"/>
        <end position="20"/>
    </location>
</feature>
<feature type="helix" evidence="8">
    <location>
        <begin position="21"/>
        <end position="29"/>
    </location>
</feature>
<feature type="strand" evidence="8">
    <location>
        <begin position="37"/>
        <end position="41"/>
    </location>
</feature>
<feature type="strand" evidence="8">
    <location>
        <begin position="47"/>
        <end position="51"/>
    </location>
</feature>
<feature type="strand" evidence="8">
    <location>
        <begin position="60"/>
        <end position="63"/>
    </location>
</feature>
<feature type="helix" evidence="8">
    <location>
        <begin position="70"/>
        <end position="86"/>
    </location>
</feature>
<feature type="strand" evidence="8">
    <location>
        <begin position="92"/>
        <end position="98"/>
    </location>
</feature>
<feature type="turn" evidence="8">
    <location>
        <begin position="100"/>
        <end position="105"/>
    </location>
</feature>
<feature type="strand" evidence="8">
    <location>
        <begin position="109"/>
        <end position="111"/>
    </location>
</feature>
<feature type="helix" evidence="8">
    <location>
        <begin position="114"/>
        <end position="124"/>
    </location>
</feature>
<feature type="strand" evidence="8">
    <location>
        <begin position="129"/>
        <end position="134"/>
    </location>
</feature>
<feature type="helix" evidence="8">
    <location>
        <begin position="138"/>
        <end position="143"/>
    </location>
</feature>
<feature type="strand" evidence="8">
    <location>
        <begin position="148"/>
        <end position="151"/>
    </location>
</feature>
<feature type="helix" evidence="8">
    <location>
        <begin position="154"/>
        <end position="164"/>
    </location>
</feature>
<feature type="helix" evidence="8">
    <location>
        <begin position="168"/>
        <end position="170"/>
    </location>
</feature>
<feature type="strand" evidence="8">
    <location>
        <begin position="172"/>
        <end position="177"/>
    </location>
</feature>
<feature type="helix" evidence="8">
    <location>
        <begin position="178"/>
        <end position="180"/>
    </location>
</feature>
<feature type="helix" evidence="8">
    <location>
        <begin position="181"/>
        <end position="191"/>
    </location>
</feature>
<feature type="strand" evidence="8">
    <location>
        <begin position="194"/>
        <end position="198"/>
    </location>
</feature>
<feature type="strand" evidence="8">
    <location>
        <begin position="243"/>
        <end position="245"/>
    </location>
</feature>
<feature type="strand" evidence="8">
    <location>
        <begin position="250"/>
        <end position="255"/>
    </location>
</feature>
<feature type="strand" evidence="8">
    <location>
        <begin position="257"/>
        <end position="261"/>
    </location>
</feature>
<feature type="helix" evidence="8">
    <location>
        <begin position="263"/>
        <end position="273"/>
    </location>
</feature>
<feature type="turn" evidence="8">
    <location>
        <begin position="274"/>
        <end position="276"/>
    </location>
</feature>
<feature type="strand" evidence="8">
    <location>
        <begin position="277"/>
        <end position="287"/>
    </location>
</feature>
<feature type="helix" evidence="8">
    <location>
        <begin position="293"/>
        <end position="299"/>
    </location>
</feature>
<feature type="strand" evidence="8">
    <location>
        <begin position="304"/>
        <end position="308"/>
    </location>
</feature>
<feature type="helix" evidence="8">
    <location>
        <begin position="314"/>
        <end position="319"/>
    </location>
</feature>
<feature type="strand" evidence="8">
    <location>
        <begin position="323"/>
        <end position="326"/>
    </location>
</feature>
<feature type="helix" evidence="8">
    <location>
        <begin position="329"/>
        <end position="341"/>
    </location>
</feature>
<feature type="helix" evidence="8">
    <location>
        <begin position="346"/>
        <end position="349"/>
    </location>
</feature>
<feature type="initiator methionine" description="Removed" evidence="1">
    <location sequence="Q14558-2">
        <position position="1"/>
    </location>
</feature>
<feature type="modified residue" description="N-acetylproline" evidence="1">
    <location sequence="Q14558-2">
        <position position="2"/>
    </location>
</feature>
<evidence type="ECO:0000269" key="1">
    <source>
    </source>
</evidence>
<evidence type="ECO:0000303" key="2">
    <source>
    </source>
</evidence>
<evidence type="ECO:0000305" key="3"/>
<evidence type="ECO:0007744" key="4">
    <source>
    </source>
</evidence>
<evidence type="ECO:0007744" key="5">
    <source>
    </source>
</evidence>
<evidence type="ECO:0007744" key="6">
    <source>
    </source>
</evidence>
<evidence type="ECO:0007744" key="7">
    <source>
    </source>
</evidence>
<evidence type="ECO:0007829" key="8">
    <source>
        <dbReference type="PDB" id="2C4K"/>
    </source>
</evidence>
<organism>
    <name type="scientific">Homo sapiens</name>
    <name type="common">Human</name>
    <dbReference type="NCBI Taxonomy" id="9606"/>
    <lineage>
        <taxon>Eukaryota</taxon>
        <taxon>Metazoa</taxon>
        <taxon>Chordata</taxon>
        <taxon>Craniata</taxon>
        <taxon>Vertebrata</taxon>
        <taxon>Euteleostomi</taxon>
        <taxon>Mammalia</taxon>
        <taxon>Eutheria</taxon>
        <taxon>Euarchontoglires</taxon>
        <taxon>Primates</taxon>
        <taxon>Haplorrhini</taxon>
        <taxon>Catarrhini</taxon>
        <taxon>Hominidae</taxon>
        <taxon>Homo</taxon>
    </lineage>
</organism>
<proteinExistence type="evidence at protein level"/>
<accession>Q14558</accession>
<accession>B2R6M4</accession>
<accession>Q96H06</accession>
<keyword id="KW-0002">3D-structure</keyword>
<keyword id="KW-0007">Acetylation</keyword>
<keyword id="KW-0025">Alternative splicing</keyword>
<keyword id="KW-0545">Nucleotide biosynthesis</keyword>
<keyword id="KW-0597">Phosphoprotein</keyword>
<keyword id="KW-1267">Proteomics identification</keyword>
<keyword id="KW-1185">Reference proteome</keyword>
<name>KPRA_HUMAN</name>
<gene>
    <name type="primary">PRPSAP1</name>
</gene>
<comment type="function">
    <text>Seems to play a negative regulatory role in 5-phosphoribose 1-diphosphate synthesis.</text>
</comment>
<comment type="subunit">
    <text>Binds to PRPS1 and PRPS2.</text>
</comment>
<comment type="interaction">
    <interactant intactId="EBI-724449">
        <id>Q14558</id>
    </interactant>
    <interactant intactId="EBI-1765641">
        <id>Q9Y6W3</id>
        <label>CAPN7</label>
    </interactant>
    <organismsDiffer>false</organismsDiffer>
    <experiments>3</experiments>
</comment>
<comment type="interaction">
    <interactant intactId="EBI-724449">
        <id>Q14558</id>
    </interactant>
    <interactant intactId="EBI-746778">
        <id>Q96A72</id>
        <label>MAGOHB</label>
    </interactant>
    <organismsDiffer>false</organismsDiffer>
    <experiments>3</experiments>
</comment>
<comment type="interaction">
    <interactant intactId="EBI-724449">
        <id>Q14558</id>
    </interactant>
    <interactant intactId="EBI-749195">
        <id>P60891</id>
        <label>PRPS1</label>
    </interactant>
    <organismsDiffer>false</organismsDiffer>
    <experiments>13</experiments>
</comment>
<comment type="interaction">
    <interactant intactId="EBI-724449">
        <id>Q14558</id>
    </interactant>
    <interactant intactId="EBI-4290895">
        <id>P11908</id>
        <label>PRPS2</label>
    </interactant>
    <organismsDiffer>false</organismsDiffer>
    <experiments>7</experiments>
</comment>
<comment type="interaction">
    <interactant intactId="EBI-724449">
        <id>Q14558</id>
    </interactant>
    <interactant intactId="EBI-12063547">
        <id>P11908-2</id>
        <label>PRPS2</label>
    </interactant>
    <organismsDiffer>false</organismsDiffer>
    <experiments>3</experiments>
</comment>
<comment type="interaction">
    <interactant intactId="EBI-724449">
        <id>Q14558</id>
    </interactant>
    <interactant intactId="EBI-724449">
        <id>Q14558</id>
        <label>PRPSAP1</label>
    </interactant>
    <organismsDiffer>false</organismsDiffer>
    <experiments>5</experiments>
</comment>
<comment type="interaction">
    <interactant intactId="EBI-724449">
        <id>Q14558</id>
    </interactant>
    <interactant intactId="EBI-724960">
        <id>O60256</id>
        <label>PRPSAP2</label>
    </interactant>
    <organismsDiffer>false</organismsDiffer>
    <experiments>8</experiments>
</comment>
<comment type="interaction">
    <interactant intactId="EBI-724449">
        <id>Q14558</id>
    </interactant>
    <interactant intactId="EBI-10180829">
        <id>Q7KZS0</id>
        <label>UBE2I</label>
    </interactant>
    <organismsDiffer>false</organismsDiffer>
    <experiments>3</experiments>
</comment>
<comment type="alternative products">
    <event type="alternative splicing"/>
    <isoform>
        <id>Q14558-1</id>
        <name>1</name>
        <sequence type="displayed"/>
    </isoform>
    <isoform>
        <id>Q14558-2</id>
        <name>2</name>
        <sequence type="described" ref="VSP_039062"/>
    </isoform>
</comment>
<comment type="tissue specificity">
    <text>Ubiquitous.</text>
</comment>
<comment type="similarity">
    <text evidence="3">Belongs to the ribose-phosphate pyrophosphokinase family.</text>
</comment>
<comment type="sequence caution" evidence="3">
    <conflict type="erroneous initiation">
        <sequence resource="EMBL-CDS" id="BAG35521"/>
    </conflict>
    <text>Truncated N-terminus.</text>
</comment>